<name>KITH_SHOC1</name>
<evidence type="ECO:0000255" key="1">
    <source>
        <dbReference type="HAMAP-Rule" id="MF_00124"/>
    </source>
</evidence>
<accession>Q5WB52</accession>
<reference key="1">
    <citation type="submission" date="2003-10" db="EMBL/GenBank/DDBJ databases">
        <title>The complete genome sequence of the alkaliphilic Bacillus clausii KSM-K16.</title>
        <authorList>
            <person name="Takaki Y."/>
            <person name="Kageyama Y."/>
            <person name="Shimamura S."/>
            <person name="Suzuki H."/>
            <person name="Nishi S."/>
            <person name="Hatada Y."/>
            <person name="Kawai S."/>
            <person name="Ito S."/>
            <person name="Horikoshi K."/>
        </authorList>
    </citation>
    <scope>NUCLEOTIDE SEQUENCE [LARGE SCALE GENOMIC DNA]</scope>
    <source>
        <strain>KSM-K16</strain>
    </source>
</reference>
<gene>
    <name evidence="1" type="primary">tdk</name>
    <name type="ordered locus">ABC3877</name>
</gene>
<dbReference type="EC" id="2.7.1.21" evidence="1"/>
<dbReference type="EMBL" id="AP006627">
    <property type="protein sequence ID" value="BAD66408.1"/>
    <property type="molecule type" value="Genomic_DNA"/>
</dbReference>
<dbReference type="RefSeq" id="WP_011248711.1">
    <property type="nucleotide sequence ID" value="NC_006582.1"/>
</dbReference>
<dbReference type="SMR" id="Q5WB52"/>
<dbReference type="STRING" id="66692.ABC3877"/>
<dbReference type="KEGG" id="bcl:ABC3877"/>
<dbReference type="eggNOG" id="COG1435">
    <property type="taxonomic scope" value="Bacteria"/>
</dbReference>
<dbReference type="HOGENOM" id="CLU_064400_2_2_9"/>
<dbReference type="OrthoDB" id="9781579at2"/>
<dbReference type="Proteomes" id="UP000001168">
    <property type="component" value="Chromosome"/>
</dbReference>
<dbReference type="GO" id="GO:0005829">
    <property type="term" value="C:cytosol"/>
    <property type="evidence" value="ECO:0007669"/>
    <property type="project" value="TreeGrafter"/>
</dbReference>
<dbReference type="GO" id="GO:0005524">
    <property type="term" value="F:ATP binding"/>
    <property type="evidence" value="ECO:0007669"/>
    <property type="project" value="UniProtKB-UniRule"/>
</dbReference>
<dbReference type="GO" id="GO:0004797">
    <property type="term" value="F:thymidine kinase activity"/>
    <property type="evidence" value="ECO:0007669"/>
    <property type="project" value="UniProtKB-UniRule"/>
</dbReference>
<dbReference type="GO" id="GO:0008270">
    <property type="term" value="F:zinc ion binding"/>
    <property type="evidence" value="ECO:0007669"/>
    <property type="project" value="UniProtKB-UniRule"/>
</dbReference>
<dbReference type="GO" id="GO:0071897">
    <property type="term" value="P:DNA biosynthetic process"/>
    <property type="evidence" value="ECO:0007669"/>
    <property type="project" value="UniProtKB-KW"/>
</dbReference>
<dbReference type="GO" id="GO:0046104">
    <property type="term" value="P:thymidine metabolic process"/>
    <property type="evidence" value="ECO:0007669"/>
    <property type="project" value="TreeGrafter"/>
</dbReference>
<dbReference type="Gene3D" id="3.30.60.20">
    <property type="match status" value="1"/>
</dbReference>
<dbReference type="Gene3D" id="3.40.50.300">
    <property type="entry name" value="P-loop containing nucleotide triphosphate hydrolases"/>
    <property type="match status" value="1"/>
</dbReference>
<dbReference type="HAMAP" id="MF_00124">
    <property type="entry name" value="Thymidine_kinase"/>
    <property type="match status" value="1"/>
</dbReference>
<dbReference type="InterPro" id="IPR027417">
    <property type="entry name" value="P-loop_NTPase"/>
</dbReference>
<dbReference type="InterPro" id="IPR001267">
    <property type="entry name" value="Thymidine_kinase"/>
</dbReference>
<dbReference type="InterPro" id="IPR020633">
    <property type="entry name" value="Thymidine_kinase_CS"/>
</dbReference>
<dbReference type="NCBIfam" id="NF003299">
    <property type="entry name" value="PRK04296.1-4"/>
    <property type="match status" value="1"/>
</dbReference>
<dbReference type="NCBIfam" id="NF003300">
    <property type="entry name" value="PRK04296.1-5"/>
    <property type="match status" value="1"/>
</dbReference>
<dbReference type="PANTHER" id="PTHR11441">
    <property type="entry name" value="THYMIDINE KINASE"/>
    <property type="match status" value="1"/>
</dbReference>
<dbReference type="PANTHER" id="PTHR11441:SF0">
    <property type="entry name" value="THYMIDINE KINASE, CYTOSOLIC"/>
    <property type="match status" value="1"/>
</dbReference>
<dbReference type="Pfam" id="PF00265">
    <property type="entry name" value="TK"/>
    <property type="match status" value="1"/>
</dbReference>
<dbReference type="PIRSF" id="PIRSF035805">
    <property type="entry name" value="TK_cell"/>
    <property type="match status" value="1"/>
</dbReference>
<dbReference type="SUPFAM" id="SSF57716">
    <property type="entry name" value="Glucocorticoid receptor-like (DNA-binding domain)"/>
    <property type="match status" value="1"/>
</dbReference>
<dbReference type="SUPFAM" id="SSF52540">
    <property type="entry name" value="P-loop containing nucleoside triphosphate hydrolases"/>
    <property type="match status" value="1"/>
</dbReference>
<dbReference type="PROSITE" id="PS00603">
    <property type="entry name" value="TK_CELLULAR_TYPE"/>
    <property type="match status" value="1"/>
</dbReference>
<comment type="catalytic activity">
    <reaction evidence="1">
        <text>thymidine + ATP = dTMP + ADP + H(+)</text>
        <dbReference type="Rhea" id="RHEA:19129"/>
        <dbReference type="ChEBI" id="CHEBI:15378"/>
        <dbReference type="ChEBI" id="CHEBI:17748"/>
        <dbReference type="ChEBI" id="CHEBI:30616"/>
        <dbReference type="ChEBI" id="CHEBI:63528"/>
        <dbReference type="ChEBI" id="CHEBI:456216"/>
        <dbReference type="EC" id="2.7.1.21"/>
    </reaction>
</comment>
<comment type="subunit">
    <text evidence="1">Homotetramer.</text>
</comment>
<comment type="subcellular location">
    <subcellularLocation>
        <location evidence="1">Cytoplasm</location>
    </subcellularLocation>
</comment>
<comment type="similarity">
    <text evidence="1">Belongs to the thymidine kinase family.</text>
</comment>
<keyword id="KW-0067">ATP-binding</keyword>
<keyword id="KW-0963">Cytoplasm</keyword>
<keyword id="KW-0237">DNA synthesis</keyword>
<keyword id="KW-0418">Kinase</keyword>
<keyword id="KW-0479">Metal-binding</keyword>
<keyword id="KW-0547">Nucleotide-binding</keyword>
<keyword id="KW-1185">Reference proteome</keyword>
<keyword id="KW-0808">Transferase</keyword>
<keyword id="KW-0862">Zinc</keyword>
<proteinExistence type="inferred from homology"/>
<sequence>MAQLFFKYGAMNSGKSIEILKVANNYEEQKKPVLIFTSGMDTRDEVGYVSSRVGLRRRAVPIFDDTNIFDYVESCRQKPYCVLIDEVQFLTKAHVLQLANIVDTLDIPVMGFGLKNDFRNELFEGSKYMLLYADKIEEMKTICWFCHKKAIMNLRVDEQGKPIYDGEQIQIGGNETYYPVCRKCHQHPPLTV</sequence>
<feature type="chain" id="PRO_0000174962" description="Thymidine kinase">
    <location>
        <begin position="1"/>
        <end position="192"/>
    </location>
</feature>
<feature type="active site" description="Proton acceptor" evidence="1">
    <location>
        <position position="86"/>
    </location>
</feature>
<feature type="binding site" evidence="1">
    <location>
        <begin position="9"/>
        <end position="16"/>
    </location>
    <ligand>
        <name>ATP</name>
        <dbReference type="ChEBI" id="CHEBI:30616"/>
    </ligand>
</feature>
<feature type="binding site" evidence="1">
    <location>
        <begin position="85"/>
        <end position="88"/>
    </location>
    <ligand>
        <name>ATP</name>
        <dbReference type="ChEBI" id="CHEBI:30616"/>
    </ligand>
</feature>
<feature type="binding site" evidence="1">
    <location>
        <position position="143"/>
    </location>
    <ligand>
        <name>Zn(2+)</name>
        <dbReference type="ChEBI" id="CHEBI:29105"/>
    </ligand>
</feature>
<feature type="binding site" evidence="1">
    <location>
        <position position="146"/>
    </location>
    <ligand>
        <name>Zn(2+)</name>
        <dbReference type="ChEBI" id="CHEBI:29105"/>
    </ligand>
</feature>
<feature type="binding site" evidence="1">
    <location>
        <position position="181"/>
    </location>
    <ligand>
        <name>Zn(2+)</name>
        <dbReference type="ChEBI" id="CHEBI:29105"/>
    </ligand>
</feature>
<feature type="binding site" evidence="1">
    <location>
        <position position="184"/>
    </location>
    <ligand>
        <name>Zn(2+)</name>
        <dbReference type="ChEBI" id="CHEBI:29105"/>
    </ligand>
</feature>
<protein>
    <recommendedName>
        <fullName evidence="1">Thymidine kinase</fullName>
        <ecNumber evidence="1">2.7.1.21</ecNumber>
    </recommendedName>
</protein>
<organism>
    <name type="scientific">Shouchella clausii (strain KSM-K16)</name>
    <name type="common">Alkalihalobacillus clausii</name>
    <dbReference type="NCBI Taxonomy" id="66692"/>
    <lineage>
        <taxon>Bacteria</taxon>
        <taxon>Bacillati</taxon>
        <taxon>Bacillota</taxon>
        <taxon>Bacilli</taxon>
        <taxon>Bacillales</taxon>
        <taxon>Bacillaceae</taxon>
        <taxon>Shouchella</taxon>
    </lineage>
</organism>